<organism>
    <name type="scientific">Mus musculus</name>
    <name type="common">Mouse</name>
    <dbReference type="NCBI Taxonomy" id="10090"/>
    <lineage>
        <taxon>Eukaryota</taxon>
        <taxon>Metazoa</taxon>
        <taxon>Chordata</taxon>
        <taxon>Craniata</taxon>
        <taxon>Vertebrata</taxon>
        <taxon>Euteleostomi</taxon>
        <taxon>Mammalia</taxon>
        <taxon>Eutheria</taxon>
        <taxon>Euarchontoglires</taxon>
        <taxon>Glires</taxon>
        <taxon>Rodentia</taxon>
        <taxon>Myomorpha</taxon>
        <taxon>Muroidea</taxon>
        <taxon>Muridae</taxon>
        <taxon>Murinae</taxon>
        <taxon>Mus</taxon>
        <taxon>Mus</taxon>
    </lineage>
</organism>
<sequence>MDSQKPPAEDKDSDPAADGLAAPEKPGATEPDLPILCIGEVSVPGSGGSRPQKPPHDCSRGPARRCALCNCGEPGLHGQRELQRFELPSDWPGFPVVPSGGNSGPCEAVLPKEDASQIGFPEGLTPAHLGEPGGHCWAHHWCAAWSAGVWGQEGPELCGVDKAIFSGISQRCSHCARFGASVPCRSPGCSRLYHFPCATASGSFLSMKTLQLLCPEHSDGAAHLEEARCAVCEGPGQLCDLLFCTSCGHHYHGACLDTALTARKRASWQCPECKVCQSCRKPGNDSKMLVCETCDKGYHTFCLKPPMEDLPAHSWKCKTCRLCRACGAGSAELNPNSEWFENYSLCHRCHKAQGSQPVTSVAEQHPAVCSRLSPPEPGEIPIDAPDALYVACQGQPKGGHVTSMQPKELAPLQCEAKPLGRAGTQLEAQLEAPLHEEMPLLPPPEESPLSPPPEESPTSPPPEASRLSPPTEESPLSPPPESSPFSPLEGCPPSPALDTPLSPPPEASPLSPPFEESPLSPPPEELPSSPPPEASRLSPPPEESPMSPPPEESPMSPPPEASRLFPPFEESPLSPPPEDSPLSPPPEASRLSPPPEDSPMSPPPEDSPMSPPPEVSRFLPLPVLSHLSPLPEVSRLSPPPEESPLSPPPEDSPASPPPEASRLSPPPEDSPASPPPEASRLSRPREDSPASPPPEDSLVSLPMEESPLSPLPEELRLCPQPEEPYLSPQPEEPRLCPQPEELPLSPQSEEPCLSPVLVEPGPSSQPEEPHLSPVPQEPHLSPQPEEPHLSPQPQQLHLSPHSEEPCLSPMPEEPCLSPQPEELNGPPQPAEPPEEPSQSSAPKELSLFSPSGEPPLPPMLGEPALSEPGEPPLSPLPEELPLSLSGEPVLSPQLMPPDPLPPPLSPIIPAAAPPALSPLGELEYPFGAKGDSDPESPLAAPILETPISPPPEANCTDPEPVPPMILPPSPGSPLGPASPILMERLPPPCSPLLPHSLPPPTPPPSHCSPPALPLSVPSPLSPVQKAVDVSDEAELHEMETDKGPEPECPALEPRATSPLPSPLGDLSCPAPSPAPALDDFSGLGEDTAPLDGTGQMSGSLAGELKGSPVLLDPEELTPVTPMEVYGPECKQAGQGSPCEEQEEPGAPMAPMPPTLIKSDIVNEISNLSQGDASASFPGSEPLLGSPDPEGGGSLSMELGVSTDVSPARDEGSLRLCTDSLPETDDSLLCDTGTATSGGKAEGDKGRRRSSPARSRIKQGRSSSFPGRRRPRGGAAHGGRGRGRARLKSTTSSVETLVADIDSSPSKEEEEEDDDTMQNTVVLFSNTDKFVLMQDMCVVCGSFGRGAEGHLLACSQCSQCYHPYCVNSKITKVMLLKGWRCVECIVCEVCGQASDPSRLLLCDDCDISYHTYCLDPPLLTVPKGGWKCKWCVSCMQCGAASPGFHCEWQNSYTHCGPCASLVTCPVCHAPYVEEDLLIQCRHCERWMHAGCESLFTEDEVEQAADEGFDCVSCQPYVVKPVVPVAPPELVPVKVKEPEPQFFRFEGVWLTETGMAVLRNLTMSPLHKRRQRRGRLGLPGEAGLEGSEPSDALGPDDKKDGDLDTDDLLKGEGGVEQMECEIKLEGPASPDVELGKEETEESKKRKRKPYRPGIGGFMVRQRKSHTRVKRGPAAQAEVLSGDGQPDEVMPADLPAEGSVEQSLAEGDEKKKQQRRARKKSKLEDMFPAYLQAAFFGKDLLDLSRKALFAVGVGRPGFGLGASKPRADGGSDRKELMTAMHKGDDGPDVADEESHGPEGTADLPGLEDGGVKASPVPSDPEKPGTPGEGVLSSDLDRIPTEELPKMESKDLQQLFKDVLGSEREQHLGCGTPGLEGGRTSLQRPFLQGGLALGSLPSSSPMDSYPGLCQSPFLDSRERGGFFSPEPGEPDSPWTGSGGTTPSTPTTPTTEGEGDGLSYNQRSLQRWEKDEELGQLSTISPVLYANINFPNLKQDYPDWSSRCKQIMKLWRKVPAADKAPYLQKAKDNRAAHRISKVQKQAESQISKQAKMGDIARKTDRPALHLRIPSQPGALGSPPPAAAPTIFLGSPTTPAGLSTSADGFLKPPAGTVPGPDSPGELFLKLPPQVPAQVPSQDPFGLAPAYAPEPRFSAAPPTYPPYPSPTGAPAQPPMLGTTTRPGTGQPGEFHTTPPGTPRHQPSTPDPFLKPRCPSLDNLAVPESPGVAGGKASEPLLSPPPFGESRKSLEVKKEELGASSPGYGPPNLGCVDSPSAGPHLGGLELKAPDVFKAPLTPRASQVEPQSPGLGLRAQEPPPAQALAPSPPSHPDVFRSGPYPDPYAQPPLTPRPQPPPPESCCAPPPRSLPSDPFSRVPASPQSQSSSQSPLTPRPLSAEAFCPSPVTPRFQSPDPYSRPPSRPQSRDPFAPLHKPPRPQPPEVAFKAGPLAHTPLGAGGFPAALPSGPAGELHAKVPSGQPTNFARSPGTGTFVGTPSPMRFTFPQGVGEPSLKPPVPQPGLPSPHGINSHFGPGPTLGKPQSTNYAVATGNFHPSGSPLGPNSGPTGEGYGLSPLRPASVLPPPAPDGSLPYLTHGASQRVGITSPVEKREDPGATMSSSSLATPELSSAQDAGISSLSQTELEKQRQRQRLRELLIRQQIQRNTLRQEKETAAAAAGAVGPPGNWGAEPSSPAFEQLSRGQTPFTGSQDRSSIVGLPASKLGGPTLGPGAFSSDDRLARPLPPATPSSMDMNSRQLVGGSQAFYQRTPYPGSLPLQQQQQQQQQQQQQQQQQQQQQQQQQQQQQLWQQQQQQQQQQQQQAAAAAAATSMRLAMSARFPSTPGPELGRQALGSPLAGIPTRLPGPAEPVPGPAGPAQFIELRHNVQKGLGPGVSPFPGQGPPQRPRFYPVSEELHRLAPEGLRGLAVPGLPSQKPSALPAPELNNSLHQTPHAKGPALASGLELVSRPPSNTELSRPPLALEAGKLPCEDPELDDDFDAHKALEDDEELAHLGLGVDVAKGDDELGTLENLETNDPHLDDLLNGDEFDLLAYTDPELDTGDKKDIFNEHLRLVESANEKAEREALLRGVEPVSLGPEERPPPAPDNSEPRLTSVLPEVKPKVEEGGRHPSPCQFTINTPKVEPAPPATSLSLGLKPGQTVMGTRDTRGGVGTGSFPSSGHTAEKGPFGATGGTPAHLLNPSSLSGPAASSLLEKFELESGALTLPSGHAAAGDELDKMESSLVASELPLLIEDLLEHEKKELQKKQQLSAQTVLPAQQQQQQQQQQQQQQQQHTLLPTPGPAQALPLPHEPGPPQQLALGIGSTRQPGLGQSMVPIQPPAHALQQRLAPSVAMVSNQGHMLSGQQAGQTGLVPQQSSQPVLAQKPMSAMPASMCMKPQQLAMQQQQLANSFFPDTDLDKFAAEDIIDPIAKAKMVALKGIKKVMAQGSIGVAPGMNRQQVSLLAQRLSGGSGSDLQNHVAPGSGQERNAGDPAQPRPNPPTFAQGVINEADQRQYEEWLFHTQQLLQMQLKVLEEQIGVHRKSRKALCAKQRTAKKAGREFPEADAEKLKLVTEQQSKIQKQLDQVRKQQKEHTNLMAEYRNKQQQQQQQQQQQQQQQHSAVLAVSPSQNPRVLTKLPGQLLPAHGLQPPQAPPGGQAGGLRLPPGGMVLPGQSGGPFLNTTLAQQQQQQHSGVAGSLTGPPGSFFPGNLALRSLGPDSRLLQERQLQLQQQRMQLAQKLQQQQQQQQQQQQQQHLLGQVAIQQQQGPGVQNQALGPKPQGLLPPSNHQGLLVQQLSPQQSQGSQGLLGPAQVTVLQQQQQQQQHSGALGPQGPHRQVLMTQSRVLSSPQLAQQGHSLMGHRLLTAQQQQQQQQQQQQQQQQQQQQQQQQQGSMTGLSQLQQGMMSHGGQPKMSAQALGSLQQQQQQLQQQQMLQQQQLQQQQQQLQQQQQQQQLQQQQQQQLQLQQQQQQQQQHLQHQQQQQQQLQQQQQLQQQQQQQLHLQQQLHQQQQLQLQQQQMGLLNQNRTLLSPQQQQQQQQQQQQQQQQQQQQQQQQQQVTLGPGLPVKPLQHFSSSGALGPTLLLTGKEQNNAETALPSEVTEGPSTHQGGPPAVGTAPEPMSVEPGEVKPSISGDSQLLLVQSQAQSQATSVQLQPPLRLPGQPQPQVNLLHTAGGGSHGQQLGSGSSSESPAVPHLLAQPSVSLGEQPGPMAQNLLGSQQPLGLDRPIQNNTGSQPPKSGPAPQSGQGPPGAGVMPTVGQLRAQLQGVLAKNPQLRHLSPQQQQQLQALLMQRQLQQSQAVRQTPPFQEPGTQPSPLQGLLGCQPQPGGFSVSQTGPLQELGAGSRPQGPPRLPVPQGALSTGPVLGPAHPTPPPSSPQEPKRPSQLPSPSAQLTPTHPGTPKPQGPALELPPGRVSPAAAQLADTFFGKGLGPWDPSDNLTEAQKPEQSSLVPGHLDQVNGQVVHEPSQLSIKQEPREEPCALGAQTVKREANGEPAGAPGTSNHLLLAGSRSEAGHLLLQKLLRAKNVQLGAGRGPEGLRAEINGHIDSKLSGLEQKLQGTSSNKEDAATRKPLPAKPKRVQKTSDRLPSSRKKLRKEDGVRANEALLKQLKQELSQLPLTEPTITANFSLFAPFGSGCLVSGQSQLRGAFGSGALHTGPDYYSQLLTKNNLSNPPTPPSSLPPTPPPSVQQKMVNGVTPSDELGERPKDTASAQDSEGALRDAAEVKSLDLLAALPTPPHNQTEDVRMESDEDSDSPDSIVPASSPESILGEEAPRFPQLGSGRWEQDNRALSPVIPIIPRTGIPVFPDTKPYGVLDLEVPGKLPATAWEKGKGSEVSVMLTVSAAAAKNLNGVMVAVAELLSMKIPNSYEVLFPDGPARAGLEPKKGEAEGPGGKEKGLSGKGPDTGPDWLKQFDAVLPGYTLKSQLDILSLLKQESPAPEPSIQHSYTYNVSNLDVRQLSAPPPEEPSPPPSPLAPSPASPPAEPMVELQAERPAEPPIPSPLPLASSPESARPKPRARPPEESEDSRPPRLKKWKGVRWKRLRLLLTIQKGSGHQEDEREVAEFMEQFGTALRPSKVPRDNRRCCFCHEEGDGATDGPARLLNLDLDLWVHLNCALWSTEVYETQGGALMNVEVALHRGLLTKCSLCQRTGATSSCNRMRCPNVYHFACAIRAKCMFFKDKTMLCPVHKIKGPCEQELSSFAVFRRVYIERDEVKQIASIIQRGERLHMFRVGGLVFHAIGQLLPHQMADFHSATALYPVGYEATRIYWSLRTNNRRCCYRCSISENNGRPEFVIKVIEQGLEDLVFTDASPQAVWNRIIEPVAAMRKEADMLRLFPEYLKGEELFGLTVHAVLRIAESLPGVESCQNYLFRYGRHPLMELPLMINPTGCARSEPKILTHYKRPHTLNSTSMSKAYQSTFTGETNTPYSKQFVHSKSSQYRRLRTEWKNNVYLARSRIQGLGLYAAKDLEKHTMVIEYIGTIIRNEVANRREKIYEEQNRGIYMFRINNEHVIDATLTGGPARYINHSCAPNCVAEVVTFDKEDKIIIISSRRIPKGEELTYDYQFDFEDDQHKIPCHCGAWNCRKWMN</sequence>
<name>KMT2D_MOUSE</name>
<comment type="function">
    <text evidence="2">Histone methyltransferase that catalyzes methyl group transfer from S-adenosyl-L-methionine to the epsilon-amino group of 'Lys-4' of histone H3 (H3K4). Part of chromatin remodeling machinery predominantly forms H3K4me1 methylation marks at active chromatin sites where transcription and DNA repair take place. Acts as a coactivator for estrogen receptor by being recruited by ESR1, thereby activating transcription.</text>
</comment>
<comment type="catalytic activity">
    <reaction evidence="2">
        <text>L-lysyl(4)-[histone H3] + S-adenosyl-L-methionine = N(6)-methyl-L-lysyl(4)-[histone H3] + S-adenosyl-L-homocysteine + H(+)</text>
        <dbReference type="Rhea" id="RHEA:60264"/>
        <dbReference type="Rhea" id="RHEA-COMP:15543"/>
        <dbReference type="Rhea" id="RHEA-COMP:15547"/>
        <dbReference type="ChEBI" id="CHEBI:15378"/>
        <dbReference type="ChEBI" id="CHEBI:29969"/>
        <dbReference type="ChEBI" id="CHEBI:57856"/>
        <dbReference type="ChEBI" id="CHEBI:59789"/>
        <dbReference type="ChEBI" id="CHEBI:61929"/>
        <dbReference type="EC" id="2.1.1.364"/>
    </reaction>
    <physiologicalReaction direction="left-to-right" evidence="2">
        <dbReference type="Rhea" id="RHEA:60265"/>
    </physiologicalReaction>
</comment>
<comment type="subunit">
    <text evidence="2 12">Component of the MLL2 complex (also named ASCOM complex), at least composed of catalytic subunit KMT2D/MLL2, ASH2L, RBBP5, WDR5, NCOA6, DPY30, KDM6A, PAXIP1/PTIP, PAGR1 and alpha- and beta-tubulin (PubMed:21335234). Forms a core complex with the evolutionary conserved subcomplex WRAD composed of WDR5, RBBP5, ASH2L/ASH2 and DPY30 subunits; WRAD differentially stimulates the methyltransferase activity. Interacts with ESR1; interaction is direct. Interacts (via WIN motif) with WDR5 (By similarity).</text>
</comment>
<comment type="subcellular location">
    <subcellularLocation>
        <location evidence="2">Nucleus</location>
    </subcellularLocation>
</comment>
<comment type="domain">
    <text evidence="1">LXXLL motifs 5 and 6 are essential for the association with ESR1 nuclear receptor.</text>
</comment>
<comment type="similarity">
    <text evidence="7">Belongs to the class V-like SAM-binding methyltransferase superfamily. Histone-lysine methyltransferase family. TRX/MLL subfamily.</text>
</comment>
<comment type="caution">
    <text evidence="13">Human protein KMT2B/MLL4 was first named MLL2 (see AC Q9UMN6). Thus, also mouse Mll4 is often referred to as Mll2 and vice versa in the literature.</text>
</comment>
<evidence type="ECO:0000250" key="1"/>
<evidence type="ECO:0000250" key="2">
    <source>
        <dbReference type="UniProtKB" id="O14686"/>
    </source>
</evidence>
<evidence type="ECO:0000255" key="3"/>
<evidence type="ECO:0000255" key="4">
    <source>
        <dbReference type="PROSITE-ProRule" id="PRU00146"/>
    </source>
</evidence>
<evidence type="ECO:0000255" key="5">
    <source>
        <dbReference type="PROSITE-ProRule" id="PRU00155"/>
    </source>
</evidence>
<evidence type="ECO:0000255" key="6">
    <source>
        <dbReference type="PROSITE-ProRule" id="PRU00175"/>
    </source>
</evidence>
<evidence type="ECO:0000255" key="7">
    <source>
        <dbReference type="PROSITE-ProRule" id="PRU00190"/>
    </source>
</evidence>
<evidence type="ECO:0000255" key="8">
    <source>
        <dbReference type="PROSITE-ProRule" id="PRU00875"/>
    </source>
</evidence>
<evidence type="ECO:0000255" key="9">
    <source>
        <dbReference type="PROSITE-ProRule" id="PRU00876"/>
    </source>
</evidence>
<evidence type="ECO:0000255" key="10">
    <source>
        <dbReference type="PROSITE-ProRule" id="PRU01146"/>
    </source>
</evidence>
<evidence type="ECO:0000256" key="11">
    <source>
        <dbReference type="SAM" id="MobiDB-lite"/>
    </source>
</evidence>
<evidence type="ECO:0000269" key="12">
    <source>
    </source>
</evidence>
<evidence type="ECO:0000305" key="13"/>
<evidence type="ECO:0007744" key="14">
    <source>
    </source>
</evidence>
<evidence type="ECO:0007744" key="15">
    <source>
    </source>
</evidence>
<evidence type="ECO:0007744" key="16">
    <source>
    </source>
</evidence>
<evidence type="ECO:0007744" key="17">
    <source>
    </source>
</evidence>
<evidence type="ECO:0007744" key="18">
    <source>
    </source>
</evidence>
<protein>
    <recommendedName>
        <fullName>Histone-lysine N-methyltransferase 2D</fullName>
        <shortName>Lysine N-methyltransferase 2D</shortName>
        <ecNumber evidence="2">2.1.1.364</ecNumber>
    </recommendedName>
    <alternativeName>
        <fullName>ALL1-related protein</fullName>
    </alternativeName>
    <alternativeName>
        <fullName>Myeloid/lymphoid or mixed-lineage leukemia protein 2</fullName>
    </alternativeName>
</protein>
<dbReference type="EC" id="2.1.1.364" evidence="2"/>
<dbReference type="EMBL" id="AC161165">
    <property type="status" value="NOT_ANNOTATED_CDS"/>
    <property type="molecule type" value="Genomic_DNA"/>
</dbReference>
<dbReference type="EMBL" id="BC058659">
    <property type="protein sequence ID" value="AAH58659.1"/>
    <property type="molecule type" value="mRNA"/>
</dbReference>
<dbReference type="CCDS" id="CCDS49725.2"/>
<dbReference type="SMR" id="Q6PDK2"/>
<dbReference type="FunCoup" id="Q6PDK2">
    <property type="interactions" value="1899"/>
</dbReference>
<dbReference type="IntAct" id="Q6PDK2">
    <property type="interactions" value="3"/>
</dbReference>
<dbReference type="STRING" id="10090.ENSMUSP00000023741"/>
<dbReference type="GlyGen" id="Q6PDK2">
    <property type="glycosylation" value="17 sites, 1 O-linked glycan (4 sites)"/>
</dbReference>
<dbReference type="iPTMnet" id="Q6PDK2"/>
<dbReference type="PhosphoSitePlus" id="Q6PDK2"/>
<dbReference type="jPOST" id="Q6PDK2"/>
<dbReference type="PaxDb" id="10090-ENSMUSP00000023741"/>
<dbReference type="PeptideAtlas" id="Q6PDK2"/>
<dbReference type="ProteomicsDB" id="264856"/>
<dbReference type="Pumba" id="Q6PDK2"/>
<dbReference type="Antibodypedia" id="25797">
    <property type="antibodies" value="136 antibodies from 31 providers"/>
</dbReference>
<dbReference type="Ensembl" id="ENSMUST00000178486.9">
    <property type="protein sequence ID" value="ENSMUSP00000135941.3"/>
    <property type="gene ID" value="ENSMUSG00000048154.18"/>
</dbReference>
<dbReference type="AGR" id="MGI:2682319"/>
<dbReference type="MGI" id="MGI:2682319">
    <property type="gene designation" value="Kmt2d"/>
</dbReference>
<dbReference type="VEuPathDB" id="HostDB:ENSMUSG00000048154"/>
<dbReference type="eggNOG" id="KOG4443">
    <property type="taxonomic scope" value="Eukaryota"/>
</dbReference>
<dbReference type="GeneTree" id="ENSGT00940000156707"/>
<dbReference type="InParanoid" id="Q6PDK2"/>
<dbReference type="OMA" id="CAVWSAG"/>
<dbReference type="PhylomeDB" id="Q6PDK2"/>
<dbReference type="BRENDA" id="2.1.1.354">
    <property type="organism ID" value="3474"/>
</dbReference>
<dbReference type="Reactome" id="R-MMU-201722">
    <property type="pathway name" value="Formation of the beta-catenin:TCF transactivating complex"/>
</dbReference>
<dbReference type="Reactome" id="R-MMU-3214841">
    <property type="pathway name" value="PKMTs methylate histone lysines"/>
</dbReference>
<dbReference type="Reactome" id="R-MMU-8936459">
    <property type="pathway name" value="RUNX1 regulates genes involved in megakaryocyte differentiation and platelet function"/>
</dbReference>
<dbReference type="Reactome" id="R-MMU-9772755">
    <property type="pathway name" value="Formation of WDR5-containing histone-modifying complexes"/>
</dbReference>
<dbReference type="Reactome" id="R-MMU-9818564">
    <property type="pathway name" value="Epigenetic regulation of gene expression by MLL3 and MLL4 complexes"/>
</dbReference>
<dbReference type="ChiTaRS" id="Kmt2d">
    <property type="organism name" value="mouse"/>
</dbReference>
<dbReference type="PRO" id="PR:Q6PDK2"/>
<dbReference type="Proteomes" id="UP000000589">
    <property type="component" value="Chromosome 15"/>
</dbReference>
<dbReference type="RNAct" id="Q6PDK2">
    <property type="molecule type" value="protein"/>
</dbReference>
<dbReference type="Bgee" id="ENSMUSG00000048154">
    <property type="expression patterns" value="Expressed in animal zygote and 96 other cell types or tissues"/>
</dbReference>
<dbReference type="ExpressionAtlas" id="Q6PDK2">
    <property type="expression patterns" value="baseline and differential"/>
</dbReference>
<dbReference type="GO" id="GO:0035097">
    <property type="term" value="C:histone methyltransferase complex"/>
    <property type="evidence" value="ECO:0000266"/>
    <property type="project" value="MGI"/>
</dbReference>
<dbReference type="GO" id="GO:0005654">
    <property type="term" value="C:nucleoplasm"/>
    <property type="evidence" value="ECO:0000304"/>
    <property type="project" value="Reactome"/>
</dbReference>
<dbReference type="GO" id="GO:0001228">
    <property type="term" value="F:DNA-binding transcription activator activity, RNA polymerase II-specific"/>
    <property type="evidence" value="ECO:0000314"/>
    <property type="project" value="CACAO"/>
</dbReference>
<dbReference type="GO" id="GO:0042800">
    <property type="term" value="F:histone H3K4 methyltransferase activity"/>
    <property type="evidence" value="ECO:0000315"/>
    <property type="project" value="UniProtKB"/>
</dbReference>
<dbReference type="GO" id="GO:0140945">
    <property type="term" value="F:histone H3K4 monomethyltransferase activity"/>
    <property type="evidence" value="ECO:0007669"/>
    <property type="project" value="RHEA"/>
</dbReference>
<dbReference type="GO" id="GO:0140999">
    <property type="term" value="F:histone H3K4 trimethyltransferase activity"/>
    <property type="evidence" value="ECO:0007669"/>
    <property type="project" value="UniProtKB-EC"/>
</dbReference>
<dbReference type="GO" id="GO:0008270">
    <property type="term" value="F:zinc ion binding"/>
    <property type="evidence" value="ECO:0007669"/>
    <property type="project" value="UniProtKB-KW"/>
</dbReference>
<dbReference type="GO" id="GO:0031507">
    <property type="term" value="P:heterochromatin formation"/>
    <property type="evidence" value="ECO:0000315"/>
    <property type="project" value="UniProtKB"/>
</dbReference>
<dbReference type="GO" id="GO:0001701">
    <property type="term" value="P:in utero embryonic development"/>
    <property type="evidence" value="ECO:0000315"/>
    <property type="project" value="MGI"/>
</dbReference>
<dbReference type="GO" id="GO:0032259">
    <property type="term" value="P:methylation"/>
    <property type="evidence" value="ECO:0007669"/>
    <property type="project" value="UniProtKB-KW"/>
</dbReference>
<dbReference type="GO" id="GO:0001555">
    <property type="term" value="P:oocyte growth"/>
    <property type="evidence" value="ECO:0000315"/>
    <property type="project" value="UniProtKB"/>
</dbReference>
<dbReference type="GO" id="GO:0048477">
    <property type="term" value="P:oogenesis"/>
    <property type="evidence" value="ECO:0000315"/>
    <property type="project" value="UniProtKB"/>
</dbReference>
<dbReference type="GO" id="GO:0010468">
    <property type="term" value="P:regulation of gene expression"/>
    <property type="evidence" value="ECO:0000315"/>
    <property type="project" value="MGI"/>
</dbReference>
<dbReference type="CDD" id="cd15695">
    <property type="entry name" value="ePHD1_KMT2D"/>
    <property type="match status" value="1"/>
</dbReference>
<dbReference type="CDD" id="cd15698">
    <property type="entry name" value="ePHD2_KMT2D"/>
    <property type="match status" value="1"/>
</dbReference>
<dbReference type="CDD" id="cd22027">
    <property type="entry name" value="HMG-box_KMT2D"/>
    <property type="match status" value="1"/>
</dbReference>
<dbReference type="CDD" id="cd15509">
    <property type="entry name" value="PHD1_KMT2C_like"/>
    <property type="match status" value="1"/>
</dbReference>
<dbReference type="CDD" id="cd15597">
    <property type="entry name" value="PHD3_KMT2D"/>
    <property type="match status" value="1"/>
</dbReference>
<dbReference type="CDD" id="cd15513">
    <property type="entry name" value="PHD5_KMT2C_like"/>
    <property type="match status" value="1"/>
</dbReference>
<dbReference type="CDD" id="cd15601">
    <property type="entry name" value="PHD5_KMT2D"/>
    <property type="match status" value="1"/>
</dbReference>
<dbReference type="CDD" id="cd19209">
    <property type="entry name" value="SET_KMT2D"/>
    <property type="match status" value="1"/>
</dbReference>
<dbReference type="FunFam" id="1.10.30.10:FF:000009">
    <property type="entry name" value="Histone-lysine N-methyltransferase"/>
    <property type="match status" value="1"/>
</dbReference>
<dbReference type="FunFam" id="2.170.270.10:FF:000119">
    <property type="entry name" value="Histone-lysine N-methyltransferase"/>
    <property type="match status" value="1"/>
</dbReference>
<dbReference type="FunFam" id="3.30.160.360:FF:000001">
    <property type="entry name" value="Histone-lysine N-methyltransferase"/>
    <property type="match status" value="1"/>
</dbReference>
<dbReference type="FunFam" id="3.30.40.10:FF:000002">
    <property type="entry name" value="Histone-lysine N-methyltransferase"/>
    <property type="match status" value="1"/>
</dbReference>
<dbReference type="FunFam" id="3.30.40.10:FF:000070">
    <property type="entry name" value="Histone-lysine N-methyltransferase"/>
    <property type="match status" value="1"/>
</dbReference>
<dbReference type="FunFam" id="3.30.40.10:FF:000336">
    <property type="entry name" value="Histone-lysine N-methyltransferase"/>
    <property type="match status" value="1"/>
</dbReference>
<dbReference type="FunFam" id="3.30.40.10:FF:001142">
    <property type="entry name" value="Histone-lysine N-methyltransferase"/>
    <property type="match status" value="1"/>
</dbReference>
<dbReference type="FunFam" id="3.30.40.10:FF:000080">
    <property type="entry name" value="Histone-lysine N-methyltransferase 2C"/>
    <property type="match status" value="1"/>
</dbReference>
<dbReference type="FunFam" id="2.170.270.10:FF:000075">
    <property type="entry name" value="Histone-lysine N-methyltransferase 2D"/>
    <property type="match status" value="1"/>
</dbReference>
<dbReference type="FunFam" id="3.30.40.10:FF:000329">
    <property type="entry name" value="Histone-lysine N-methyltransferase 2D"/>
    <property type="match status" value="1"/>
</dbReference>
<dbReference type="Gene3D" id="3.30.160.360">
    <property type="match status" value="1"/>
</dbReference>
<dbReference type="Gene3D" id="1.10.30.10">
    <property type="entry name" value="High mobility group box domain"/>
    <property type="match status" value="1"/>
</dbReference>
<dbReference type="Gene3D" id="2.170.270.10">
    <property type="entry name" value="SET domain"/>
    <property type="match status" value="1"/>
</dbReference>
<dbReference type="Gene3D" id="3.30.40.10">
    <property type="entry name" value="Zinc/RING finger domain, C3HC4 (zinc finger)"/>
    <property type="match status" value="7"/>
</dbReference>
<dbReference type="InterPro" id="IPR034732">
    <property type="entry name" value="EPHD"/>
</dbReference>
<dbReference type="InterPro" id="IPR003889">
    <property type="entry name" value="FYrich_C"/>
</dbReference>
<dbReference type="InterPro" id="IPR003888">
    <property type="entry name" value="FYrich_N"/>
</dbReference>
<dbReference type="InterPro" id="IPR009071">
    <property type="entry name" value="HMG_box_dom"/>
</dbReference>
<dbReference type="InterPro" id="IPR036910">
    <property type="entry name" value="HMG_box_dom_sf"/>
</dbReference>
<dbReference type="InterPro" id="IPR041961">
    <property type="entry name" value="KMT2D_ePHD1"/>
</dbReference>
<dbReference type="InterPro" id="IPR041964">
    <property type="entry name" value="KMT2D_ePHD2"/>
</dbReference>
<dbReference type="InterPro" id="IPR047000">
    <property type="entry name" value="KMT2D_PHD3"/>
</dbReference>
<dbReference type="InterPro" id="IPR046999">
    <property type="entry name" value="KMT2D_PHD5"/>
</dbReference>
<dbReference type="InterPro" id="IPR003616">
    <property type="entry name" value="Post-SET_dom"/>
</dbReference>
<dbReference type="InterPro" id="IPR001214">
    <property type="entry name" value="SET_dom"/>
</dbReference>
<dbReference type="InterPro" id="IPR046341">
    <property type="entry name" value="SET_dom_sf"/>
</dbReference>
<dbReference type="InterPro" id="IPR037890">
    <property type="entry name" value="SET_KMT2D"/>
</dbReference>
<dbReference type="InterPro" id="IPR011011">
    <property type="entry name" value="Znf_FYVE_PHD"/>
</dbReference>
<dbReference type="InterPro" id="IPR001965">
    <property type="entry name" value="Znf_PHD"/>
</dbReference>
<dbReference type="InterPro" id="IPR019787">
    <property type="entry name" value="Znf_PHD-finger"/>
</dbReference>
<dbReference type="InterPro" id="IPR001841">
    <property type="entry name" value="Znf_RING"/>
</dbReference>
<dbReference type="InterPro" id="IPR013083">
    <property type="entry name" value="Znf_RING/FYVE/PHD"/>
</dbReference>
<dbReference type="PANTHER" id="PTHR45888:SF2">
    <property type="entry name" value="HISTONE-LYSINE N-METHYLTRANSFERASE 2D"/>
    <property type="match status" value="1"/>
</dbReference>
<dbReference type="PANTHER" id="PTHR45888">
    <property type="entry name" value="HL01030P-RELATED"/>
    <property type="match status" value="1"/>
</dbReference>
<dbReference type="Pfam" id="PF05965">
    <property type="entry name" value="FYRC"/>
    <property type="match status" value="1"/>
</dbReference>
<dbReference type="Pfam" id="PF05964">
    <property type="entry name" value="FYRN"/>
    <property type="match status" value="1"/>
</dbReference>
<dbReference type="Pfam" id="PF00628">
    <property type="entry name" value="PHD"/>
    <property type="match status" value="4"/>
</dbReference>
<dbReference type="Pfam" id="PF00856">
    <property type="entry name" value="SET"/>
    <property type="match status" value="1"/>
</dbReference>
<dbReference type="Pfam" id="PF13771">
    <property type="entry name" value="zf-HC5HC2H"/>
    <property type="match status" value="1"/>
</dbReference>
<dbReference type="Pfam" id="PF13832">
    <property type="entry name" value="zf-HC5HC2H_2"/>
    <property type="match status" value="1"/>
</dbReference>
<dbReference type="SMART" id="SM00542">
    <property type="entry name" value="FYRC"/>
    <property type="match status" value="1"/>
</dbReference>
<dbReference type="SMART" id="SM00541">
    <property type="entry name" value="FYRN"/>
    <property type="match status" value="1"/>
</dbReference>
<dbReference type="SMART" id="SM00398">
    <property type="entry name" value="HMG"/>
    <property type="match status" value="1"/>
</dbReference>
<dbReference type="SMART" id="SM00249">
    <property type="entry name" value="PHD"/>
    <property type="match status" value="7"/>
</dbReference>
<dbReference type="SMART" id="SM00508">
    <property type="entry name" value="PostSET"/>
    <property type="match status" value="1"/>
</dbReference>
<dbReference type="SMART" id="SM00184">
    <property type="entry name" value="RING"/>
    <property type="match status" value="6"/>
</dbReference>
<dbReference type="SMART" id="SM00317">
    <property type="entry name" value="SET"/>
    <property type="match status" value="1"/>
</dbReference>
<dbReference type="SUPFAM" id="SSF57903">
    <property type="entry name" value="FYVE/PHD zinc finger"/>
    <property type="match status" value="5"/>
</dbReference>
<dbReference type="SUPFAM" id="SSF47095">
    <property type="entry name" value="HMG-box"/>
    <property type="match status" value="1"/>
</dbReference>
<dbReference type="SUPFAM" id="SSF82199">
    <property type="entry name" value="SET domain"/>
    <property type="match status" value="1"/>
</dbReference>
<dbReference type="PROSITE" id="PS51805">
    <property type="entry name" value="EPHD"/>
    <property type="match status" value="2"/>
</dbReference>
<dbReference type="PROSITE" id="PS51543">
    <property type="entry name" value="FYRC"/>
    <property type="match status" value="1"/>
</dbReference>
<dbReference type="PROSITE" id="PS51542">
    <property type="entry name" value="FYRN"/>
    <property type="match status" value="1"/>
</dbReference>
<dbReference type="PROSITE" id="PS50868">
    <property type="entry name" value="POST_SET"/>
    <property type="match status" value="1"/>
</dbReference>
<dbReference type="PROSITE" id="PS50280">
    <property type="entry name" value="SET"/>
    <property type="match status" value="1"/>
</dbReference>
<dbReference type="PROSITE" id="PS01359">
    <property type="entry name" value="ZF_PHD_1"/>
    <property type="match status" value="5"/>
</dbReference>
<dbReference type="PROSITE" id="PS50016">
    <property type="entry name" value="ZF_PHD_2"/>
    <property type="match status" value="4"/>
</dbReference>
<dbReference type="PROSITE" id="PS50089">
    <property type="entry name" value="ZF_RING_2"/>
    <property type="match status" value="1"/>
</dbReference>
<proteinExistence type="evidence at protein level"/>
<reference key="1">
    <citation type="journal article" date="2009" name="PLoS Biol.">
        <title>Lineage-specific biology revealed by a finished genome assembly of the mouse.</title>
        <authorList>
            <person name="Church D.M."/>
            <person name="Goodstadt L."/>
            <person name="Hillier L.W."/>
            <person name="Zody M.C."/>
            <person name="Goldstein S."/>
            <person name="She X."/>
            <person name="Bult C.J."/>
            <person name="Agarwala R."/>
            <person name="Cherry J.L."/>
            <person name="DiCuccio M."/>
            <person name="Hlavina W."/>
            <person name="Kapustin Y."/>
            <person name="Meric P."/>
            <person name="Maglott D."/>
            <person name="Birtle Z."/>
            <person name="Marques A.C."/>
            <person name="Graves T."/>
            <person name="Zhou S."/>
            <person name="Teague B."/>
            <person name="Potamousis K."/>
            <person name="Churas C."/>
            <person name="Place M."/>
            <person name="Herschleb J."/>
            <person name="Runnheim R."/>
            <person name="Forrest D."/>
            <person name="Amos-Landgraf J."/>
            <person name="Schwartz D.C."/>
            <person name="Cheng Z."/>
            <person name="Lindblad-Toh K."/>
            <person name="Eichler E.E."/>
            <person name="Ponting C.P."/>
        </authorList>
    </citation>
    <scope>NUCLEOTIDE SEQUENCE [LARGE SCALE GENOMIC DNA]</scope>
    <source>
        <strain>C57BL/6J</strain>
    </source>
</reference>
<reference key="2">
    <citation type="journal article" date="2004" name="Genome Res.">
        <title>The status, quality, and expansion of the NIH full-length cDNA project: the Mammalian Gene Collection (MGC).</title>
        <authorList>
            <consortium name="The MGC Project Team"/>
        </authorList>
    </citation>
    <scope>NUCLEOTIDE SEQUENCE [LARGE SCALE MRNA] OF 4339-5588</scope>
    <source>
        <strain>C57BL/6J</strain>
        <tissue>Brain</tissue>
    </source>
</reference>
<reference key="3">
    <citation type="journal article" date="2006" name="Mol. Cell. Proteomics">
        <title>Comprehensive identification of phosphorylation sites in postsynaptic density preparations.</title>
        <authorList>
            <person name="Trinidad J.C."/>
            <person name="Specht C.G."/>
            <person name="Thalhammer A."/>
            <person name="Schoepfer R."/>
            <person name="Burlingame A.L."/>
        </authorList>
    </citation>
    <scope>PHOSPHORYLATION [LARGE SCALE ANALYSIS] AT SER-4789</scope>
    <scope>IDENTIFICATION BY MASS SPECTROMETRY [LARGE SCALE ANALYSIS]</scope>
    <source>
        <tissue>Brain</tissue>
    </source>
</reference>
<reference key="4">
    <citation type="journal article" date="2007" name="Proc. Natl. Acad. Sci. U.S.A.">
        <title>Large-scale phosphorylation analysis of mouse liver.</title>
        <authorList>
            <person name="Villen J."/>
            <person name="Beausoleil S.A."/>
            <person name="Gerber S.A."/>
            <person name="Gygi S.P."/>
        </authorList>
    </citation>
    <scope>PHOSPHORYLATION [LARGE SCALE ANALYSIS] AT SER-1627</scope>
    <scope>IDENTIFICATION BY MASS SPECTROMETRY [LARGE SCALE ANALYSIS]</scope>
    <source>
        <tissue>Liver</tissue>
    </source>
</reference>
<reference key="5">
    <citation type="journal article" date="2010" name="Cell">
        <title>A tissue-specific atlas of mouse protein phosphorylation and expression.</title>
        <authorList>
            <person name="Huttlin E.L."/>
            <person name="Jedrychowski M.P."/>
            <person name="Elias J.E."/>
            <person name="Goswami T."/>
            <person name="Rad R."/>
            <person name="Beausoleil S.A."/>
            <person name="Villen J."/>
            <person name="Haas W."/>
            <person name="Sowa M.E."/>
            <person name="Gygi S.P."/>
        </authorList>
    </citation>
    <scope>PHOSPHORYLATION [LARGE SCALE ANALYSIS] AT SER-727; THR-1223; SER-1226; SER-1627; THR-1822; SER-2266; SER-2299; SER-2597; SER-4410 AND SER-4789</scope>
    <scope>IDENTIFICATION BY MASS SPECTROMETRY [LARGE SCALE ANALYSIS]</scope>
    <source>
        <tissue>Brain</tissue>
        <tissue>Kidney</tissue>
        <tissue>Liver</tissue>
        <tissue>Lung</tissue>
        <tissue>Pancreas</tissue>
        <tissue>Spleen</tissue>
        <tissue>Testis</tissue>
    </source>
</reference>
<reference key="6">
    <citation type="journal article" date="2011" name="Cell">
        <title>Role for Dpy-30 in ES cell-fate specification by regulation of H3K4 methylation within bivalent domains.</title>
        <authorList>
            <person name="Jiang H."/>
            <person name="Shukla A."/>
            <person name="Wang X."/>
            <person name="Chen W.Y."/>
            <person name="Bernstein B.E."/>
            <person name="Roeder R.G."/>
        </authorList>
    </citation>
    <scope>IDENTIFICATION IN THE MLL COMPLEX</scope>
    <scope>INTERACTION WITH ASH2L; DPY30; KMT2A; RRBP5 AND WDR5</scope>
</reference>
<reference key="7">
    <citation type="journal article" date="2013" name="Mol. Cell">
        <title>SIRT5-mediated lysine desuccinylation impacts diverse metabolic pathways.</title>
        <authorList>
            <person name="Park J."/>
            <person name="Chen Y."/>
            <person name="Tishkoff D.X."/>
            <person name="Peng C."/>
            <person name="Tan M."/>
            <person name="Dai L."/>
            <person name="Xie Z."/>
            <person name="Zhang Y."/>
            <person name="Zwaans B.M."/>
            <person name="Skinner M.E."/>
            <person name="Lombard D.B."/>
            <person name="Zhao Y."/>
        </authorList>
    </citation>
    <scope>ACETYLATION [LARGE SCALE ANALYSIS] AT LYS-3071</scope>
    <scope>IDENTIFICATION BY MASS SPECTROMETRY [LARGE SCALE ANALYSIS]</scope>
    <source>
        <tissue>Embryonic fibroblast</tissue>
    </source>
</reference>
<reference key="8">
    <citation type="journal article" date="2014" name="Mol. Cell. Proteomics">
        <title>Immunoaffinity enrichment and mass spectrometry analysis of protein methylation.</title>
        <authorList>
            <person name="Guo A."/>
            <person name="Gu H."/>
            <person name="Zhou J."/>
            <person name="Mulhern D."/>
            <person name="Wang Y."/>
            <person name="Lee K.A."/>
            <person name="Yang V."/>
            <person name="Aguiar M."/>
            <person name="Kornhauser J."/>
            <person name="Jia X."/>
            <person name="Ren J."/>
            <person name="Beausoleil S.A."/>
            <person name="Silva J.C."/>
            <person name="Vemulapalli V."/>
            <person name="Bedford M.T."/>
            <person name="Comb M.J."/>
        </authorList>
    </citation>
    <scope>METHYLATION [LARGE SCALE ANALYSIS] AT ARG-2492; ARG-2829; ARG-3725 AND ARG-4255</scope>
    <scope>IDENTIFICATION BY MASS SPECTROMETRY [LARGE SCALE ANALYSIS]</scope>
    <source>
        <tissue>Brain</tissue>
        <tissue>Embryo</tissue>
    </source>
</reference>
<feature type="chain" id="PRO_0000401938" description="Histone-lysine N-methyltransferase 2D">
    <location>
        <begin position="1"/>
        <end position="5588"/>
    </location>
</feature>
<feature type="repeat" description="1">
    <location>
        <begin position="442"/>
        <end position="446"/>
    </location>
</feature>
<feature type="repeat" description="2">
    <location>
        <begin position="460"/>
        <end position="464"/>
    </location>
</feature>
<feature type="repeat" description="4">
    <location>
        <begin position="469"/>
        <end position="473"/>
    </location>
</feature>
<feature type="repeat" description="5">
    <location>
        <begin position="477"/>
        <end position="481"/>
    </location>
</feature>
<feature type="repeat" description="7">
    <location>
        <begin position="520"/>
        <end position="524"/>
    </location>
</feature>
<feature type="repeat" description="8">
    <location>
        <begin position="529"/>
        <end position="533"/>
    </location>
</feature>
<feature type="repeat" description="9">
    <location>
        <begin position="538"/>
        <end position="542"/>
    </location>
</feature>
<feature type="repeat" description="10">
    <location>
        <begin position="547"/>
        <end position="551"/>
    </location>
</feature>
<feature type="repeat" description="11">
    <location>
        <begin position="574"/>
        <end position="578"/>
    </location>
</feature>
<feature type="repeat" description="12">
    <location>
        <begin position="583"/>
        <end position="587"/>
    </location>
</feature>
<feature type="repeat" description="13">
    <location>
        <begin position="592"/>
        <end position="596"/>
    </location>
</feature>
<feature type="repeat" description="14">
    <location>
        <begin position="610"/>
        <end position="614"/>
    </location>
</feature>
<feature type="repeat" description="15">
    <location>
        <begin position="637"/>
        <end position="641"/>
    </location>
</feature>
<feature type="domain" description="FYR N-terminal" evidence="8">
    <location>
        <begin position="5226"/>
        <end position="5286"/>
    </location>
</feature>
<feature type="domain" description="FYR C-terminal" evidence="9">
    <location>
        <begin position="5287"/>
        <end position="5372"/>
    </location>
</feature>
<feature type="domain" description="SET" evidence="7">
    <location>
        <begin position="5448"/>
        <end position="5564"/>
    </location>
</feature>
<feature type="domain" description="Post-SET" evidence="5">
    <location>
        <begin position="5572"/>
        <end position="5588"/>
    </location>
</feature>
<feature type="zinc finger region" description="C2HC pre-PHD-type 1; degenerate" evidence="10">
    <location>
        <begin position="104"/>
        <end position="149"/>
    </location>
</feature>
<feature type="zinc finger region" description="PHD-type 1" evidence="10">
    <location>
        <begin position="170"/>
        <end position="218"/>
    </location>
</feature>
<feature type="zinc finger region" description="PHD-type 2; degenerate" evidence="4">
    <location>
        <begin position="226"/>
        <end position="276"/>
    </location>
</feature>
<feature type="zinc finger region" description="RING-type 1; atypical" evidence="6">
    <location>
        <begin position="229"/>
        <end position="274"/>
    </location>
</feature>
<feature type="zinc finger region" description="PHD-type 3" evidence="4">
    <location>
        <begin position="270"/>
        <end position="323"/>
    </location>
</feature>
<feature type="zinc finger region" description="RING-type 2; degenerate" evidence="6">
    <location>
        <begin position="276"/>
        <end position="321"/>
    </location>
</feature>
<feature type="zinc finger region" description="PHD-type 4" evidence="4">
    <location>
        <begin position="1071"/>
        <end position="1124"/>
    </location>
</feature>
<feature type="zinc finger region" description="PHD-type 5" evidence="4">
    <location>
        <begin position="1121"/>
        <end position="1171"/>
    </location>
</feature>
<feature type="zinc finger region" description="PHD-type 6" evidence="4">
    <location>
        <begin position="1198"/>
        <end position="1253"/>
    </location>
</feature>
<feature type="zinc finger region" description="RING-type 3; atypical" evidence="6">
    <location>
        <begin position="1201"/>
        <end position="1251"/>
    </location>
</feature>
<feature type="zinc finger region" description="RING-type 4; degenerate" evidence="6">
    <location>
        <begin position="4829"/>
        <end position="4874"/>
    </location>
</feature>
<feature type="zinc finger region" description="C2HC pre-PHD-type 2" evidence="10">
    <location>
        <begin position="5080"/>
        <end position="5120"/>
    </location>
</feature>
<feature type="zinc finger region" description="PHD-type 7" evidence="10">
    <location>
        <begin position="5141"/>
        <end position="5188"/>
    </location>
</feature>
<feature type="region of interest" description="Disordered" evidence="11">
    <location>
        <begin position="1"/>
        <end position="61"/>
    </location>
</feature>
<feature type="region of interest" description="Disordered" evidence="11">
    <location>
        <begin position="438"/>
        <end position="908"/>
    </location>
</feature>
<feature type="region of interest" description="15 X 5 AA repeats of S/P-P-P-E/P-E/A">
    <location>
        <begin position="439"/>
        <end position="642"/>
    </location>
</feature>
<feature type="region of interest" description="Disordered" evidence="11">
    <location>
        <begin position="922"/>
        <end position="1315"/>
    </location>
</feature>
<feature type="region of interest" description="Disordered" evidence="11">
    <location>
        <begin position="1566"/>
        <end position="1721"/>
    </location>
</feature>
<feature type="region of interest" description="Disordered" evidence="11">
    <location>
        <begin position="1751"/>
        <end position="1846"/>
    </location>
</feature>
<feature type="region of interest" description="Disordered" evidence="11">
    <location>
        <begin position="1886"/>
        <end position="1962"/>
    </location>
</feature>
<feature type="region of interest" description="Disordered" evidence="11">
    <location>
        <begin position="2095"/>
        <end position="2641"/>
    </location>
</feature>
<feature type="region of interest" description="Disordered" evidence="11">
    <location>
        <begin position="2655"/>
        <end position="2806"/>
    </location>
</feature>
<feature type="region of interest" description="Disordered" evidence="11">
    <location>
        <begin position="3069"/>
        <end position="3104"/>
    </location>
</feature>
<feature type="region of interest" description="Disordered" evidence="11">
    <location>
        <begin position="3129"/>
        <end position="3193"/>
    </location>
</feature>
<feature type="region of interest" description="Disordered" evidence="11">
    <location>
        <begin position="3271"/>
        <end position="3326"/>
    </location>
</feature>
<feature type="region of interest" description="Disordered" evidence="11">
    <location>
        <begin position="3460"/>
        <end position="3496"/>
    </location>
</feature>
<feature type="region of interest" description="Disordered" evidence="11">
    <location>
        <begin position="3593"/>
        <end position="3617"/>
    </location>
</feature>
<feature type="region of interest" description="Disordered" evidence="11">
    <location>
        <begin position="3633"/>
        <end position="3661"/>
    </location>
</feature>
<feature type="region of interest" description="Disordered" evidence="11">
    <location>
        <begin position="3678"/>
        <end position="3704"/>
    </location>
</feature>
<feature type="region of interest" description="Disordered" evidence="11">
    <location>
        <begin position="3760"/>
        <end position="3780"/>
    </location>
</feature>
<feature type="region of interest" description="Disordered" evidence="11">
    <location>
        <begin position="3808"/>
        <end position="3827"/>
    </location>
</feature>
<feature type="region of interest" description="Disordered" evidence="11">
    <location>
        <begin position="4053"/>
        <end position="4249"/>
    </location>
</feature>
<feature type="region of interest" description="Disordered" evidence="11">
    <location>
        <begin position="4290"/>
        <end position="4452"/>
    </location>
</feature>
<feature type="region of interest" description="Disordered" evidence="11">
    <location>
        <begin position="4553"/>
        <end position="4596"/>
    </location>
</feature>
<feature type="region of interest" description="Disordered" evidence="11">
    <location>
        <begin position="4664"/>
        <end position="4716"/>
    </location>
</feature>
<feature type="region of interest" description="Disordered" evidence="11">
    <location>
        <begin position="4729"/>
        <end position="4778"/>
    </location>
</feature>
<feature type="region of interest" description="Disordered" evidence="11">
    <location>
        <begin position="4877"/>
        <end position="4908"/>
    </location>
</feature>
<feature type="region of interest" description="Disordered" evidence="11">
    <location>
        <begin position="4956"/>
        <end position="5031"/>
    </location>
</feature>
<feature type="coiled-coil region" evidence="3">
    <location>
        <begin position="2627"/>
        <end position="2665"/>
    </location>
</feature>
<feature type="coiled-coil region" evidence="3">
    <location>
        <begin position="2768"/>
        <end position="2813"/>
    </location>
</feature>
<feature type="coiled-coil region" evidence="3">
    <location>
        <begin position="3559"/>
        <end position="3613"/>
    </location>
</feature>
<feature type="coiled-coil region" evidence="3">
    <location>
        <begin position="3712"/>
        <end position="3747"/>
    </location>
</feature>
<feature type="coiled-coil region" evidence="3">
    <location>
        <begin position="3854"/>
        <end position="3883"/>
    </location>
</feature>
<feature type="coiled-coil region" evidence="3">
    <location>
        <begin position="3912"/>
        <end position="4052"/>
    </location>
</feature>
<feature type="short sequence motif" description="LXXLL motif 1">
    <location>
        <begin position="2644"/>
        <end position="2648"/>
    </location>
</feature>
<feature type="short sequence motif" description="LXXLL motif 2">
    <location>
        <begin position="3030"/>
        <end position="3034"/>
    </location>
</feature>
<feature type="short sequence motif" description="LXXLL motif 3">
    <location>
        <begin position="4279"/>
        <end position="4283"/>
    </location>
</feature>
<feature type="short sequence motif" description="LXXLL motif 4">
    <location>
        <begin position="4310"/>
        <end position="4314"/>
    </location>
</feature>
<feature type="short sequence motif" description="LXXLL motif 5">
    <location>
        <begin position="4514"/>
        <end position="4518"/>
    </location>
</feature>
<feature type="short sequence motif" description="LXXLL motif 6">
    <location>
        <begin position="5041"/>
        <end position="5045"/>
    </location>
</feature>
<feature type="short sequence motif" description="WDR5 interaction motif (WIN)" evidence="2">
    <location>
        <begin position="5388"/>
        <end position="5393"/>
    </location>
</feature>
<feature type="compositionally biased region" description="Pro residues" evidence="11">
    <location>
        <begin position="440"/>
        <end position="463"/>
    </location>
</feature>
<feature type="compositionally biased region" description="Low complexity" evidence="11">
    <location>
        <begin position="464"/>
        <end position="475"/>
    </location>
</feature>
<feature type="compositionally biased region" description="Pro residues" evidence="11">
    <location>
        <begin position="490"/>
        <end position="512"/>
    </location>
</feature>
<feature type="compositionally biased region" description="Pro residues" evidence="11">
    <location>
        <begin position="519"/>
        <end position="560"/>
    </location>
</feature>
<feature type="compositionally biased region" description="Low complexity" evidence="11">
    <location>
        <begin position="561"/>
        <end position="572"/>
    </location>
</feature>
<feature type="compositionally biased region" description="Pro residues" evidence="11">
    <location>
        <begin position="573"/>
        <end position="614"/>
    </location>
</feature>
<feature type="compositionally biased region" description="Low complexity" evidence="11">
    <location>
        <begin position="619"/>
        <end position="636"/>
    </location>
</feature>
<feature type="compositionally biased region" description="Pro residues" evidence="11">
    <location>
        <begin position="637"/>
        <end position="677"/>
    </location>
</feature>
<feature type="compositionally biased region" description="Low complexity" evidence="11">
    <location>
        <begin position="696"/>
        <end position="712"/>
    </location>
</feature>
<feature type="compositionally biased region" description="Low complexity" evidence="11">
    <location>
        <begin position="735"/>
        <end position="755"/>
    </location>
</feature>
<feature type="compositionally biased region" description="Low complexity" evidence="11">
    <location>
        <begin position="836"/>
        <end position="851"/>
    </location>
</feature>
<feature type="compositionally biased region" description="Low complexity" evidence="11">
    <location>
        <begin position="876"/>
        <end position="893"/>
    </location>
</feature>
<feature type="compositionally biased region" description="Pro residues" evidence="11">
    <location>
        <begin position="894"/>
        <end position="908"/>
    </location>
</feature>
<feature type="compositionally biased region" description="Pro residues" evidence="11">
    <location>
        <begin position="959"/>
        <end position="973"/>
    </location>
</feature>
<feature type="compositionally biased region" description="Pro residues" evidence="11">
    <location>
        <begin position="985"/>
        <end position="1012"/>
    </location>
</feature>
<feature type="compositionally biased region" description="Low complexity" evidence="11">
    <location>
        <begin position="1013"/>
        <end position="1023"/>
    </location>
</feature>
<feature type="compositionally biased region" description="Basic and acidic residues" evidence="11">
    <location>
        <begin position="1033"/>
        <end position="1045"/>
    </location>
</feature>
<feature type="compositionally biased region" description="Polar residues" evidence="11">
    <location>
        <begin position="1163"/>
        <end position="1172"/>
    </location>
</feature>
<feature type="compositionally biased region" description="Basic residues" evidence="11">
    <location>
        <begin position="1245"/>
        <end position="1258"/>
    </location>
</feature>
<feature type="compositionally biased region" description="Basic and acidic residues" evidence="11">
    <location>
        <begin position="1593"/>
        <end position="1608"/>
    </location>
</feature>
<feature type="compositionally biased region" description="Basic and acidic residues" evidence="11">
    <location>
        <begin position="1631"/>
        <end position="1641"/>
    </location>
</feature>
<feature type="compositionally biased region" description="Basic residues" evidence="11">
    <location>
        <begin position="1658"/>
        <end position="1668"/>
    </location>
</feature>
<feature type="compositionally biased region" description="Basic residues" evidence="11">
    <location>
        <begin position="1709"/>
        <end position="1718"/>
    </location>
</feature>
<feature type="compositionally biased region" description="Basic and acidic residues" evidence="11">
    <location>
        <begin position="1762"/>
        <end position="1782"/>
    </location>
</feature>
<feature type="compositionally biased region" description="Basic and acidic residues" evidence="11">
    <location>
        <begin position="1831"/>
        <end position="1846"/>
    </location>
</feature>
<feature type="compositionally biased region" description="Low complexity" evidence="11">
    <location>
        <begin position="1886"/>
        <end position="1896"/>
    </location>
</feature>
<feature type="compositionally biased region" description="Low complexity" evidence="11">
    <location>
        <begin position="1936"/>
        <end position="1947"/>
    </location>
</feature>
<feature type="compositionally biased region" description="Pro residues" evidence="11">
    <location>
        <begin position="2151"/>
        <end position="2166"/>
    </location>
</feature>
<feature type="compositionally biased region" description="Low complexity" evidence="11">
    <location>
        <begin position="2170"/>
        <end position="2181"/>
    </location>
</feature>
<feature type="compositionally biased region" description="Basic and acidic residues" evidence="11">
    <location>
        <begin position="2237"/>
        <end position="2249"/>
    </location>
</feature>
<feature type="compositionally biased region" description="Pro residues" evidence="11">
    <location>
        <begin position="2308"/>
        <end position="2322"/>
    </location>
</feature>
<feature type="compositionally biased region" description="Pro residues" evidence="11">
    <location>
        <begin position="2331"/>
        <end position="2359"/>
    </location>
</feature>
<feature type="compositionally biased region" description="Low complexity" evidence="11">
    <location>
        <begin position="2366"/>
        <end position="2388"/>
    </location>
</feature>
<feature type="compositionally biased region" description="Polar residues" evidence="11">
    <location>
        <begin position="2470"/>
        <end position="2486"/>
    </location>
</feature>
<feature type="compositionally biased region" description="Pro residues" evidence="11">
    <location>
        <begin position="2504"/>
        <end position="2514"/>
    </location>
</feature>
<feature type="compositionally biased region" description="Low complexity" evidence="11">
    <location>
        <begin position="2546"/>
        <end position="2557"/>
    </location>
</feature>
<feature type="compositionally biased region" description="Low complexity" evidence="11">
    <location>
        <begin position="2610"/>
        <end position="2622"/>
    </location>
</feature>
<feature type="compositionally biased region" description="Low complexity" evidence="11">
    <location>
        <begin position="2665"/>
        <end position="2680"/>
    </location>
</feature>
<feature type="compositionally biased region" description="Polar residues" evidence="11">
    <location>
        <begin position="2691"/>
        <end position="2704"/>
    </location>
</feature>
<feature type="compositionally biased region" description="Polar residues" evidence="11">
    <location>
        <begin position="2739"/>
        <end position="2748"/>
    </location>
</feature>
<feature type="compositionally biased region" description="Low complexity" evidence="11">
    <location>
        <begin position="2769"/>
        <end position="2806"/>
    </location>
</feature>
<feature type="compositionally biased region" description="Low complexity" evidence="11">
    <location>
        <begin position="3271"/>
        <end position="3284"/>
    </location>
</feature>
<feature type="compositionally biased region" description="Low complexity" evidence="11">
    <location>
        <begin position="3596"/>
        <end position="3610"/>
    </location>
</feature>
<feature type="compositionally biased region" description="Low complexity" evidence="11">
    <location>
        <begin position="4128"/>
        <end position="4159"/>
    </location>
</feature>
<feature type="compositionally biased region" description="Low complexity" evidence="11">
    <location>
        <begin position="4172"/>
        <end position="4183"/>
    </location>
</feature>
<feature type="compositionally biased region" description="Low complexity" evidence="11">
    <location>
        <begin position="4226"/>
        <end position="4240"/>
    </location>
</feature>
<feature type="compositionally biased region" description="Polar residues" evidence="11">
    <location>
        <begin position="4294"/>
        <end position="4305"/>
    </location>
</feature>
<feature type="compositionally biased region" description="Low complexity" evidence="11">
    <location>
        <begin position="4307"/>
        <end position="4322"/>
    </location>
</feature>
<feature type="compositionally biased region" description="Polar residues" evidence="11">
    <location>
        <begin position="4379"/>
        <end position="4391"/>
    </location>
</feature>
<feature type="compositionally biased region" description="Polar residues" evidence="11">
    <location>
        <begin position="4432"/>
        <end position="4445"/>
    </location>
</feature>
<feature type="compositionally biased region" description="Pro residues" evidence="11">
    <location>
        <begin position="4670"/>
        <end position="4684"/>
    </location>
</feature>
<feature type="compositionally biased region" description="Basic and acidic residues" evidence="11">
    <location>
        <begin position="4879"/>
        <end position="4896"/>
    </location>
</feature>
<feature type="compositionally biased region" description="Pro residues" evidence="11">
    <location>
        <begin position="4959"/>
        <end position="4982"/>
    </location>
</feature>
<feature type="compositionally biased region" description="Basic and acidic residues" evidence="11">
    <location>
        <begin position="5017"/>
        <end position="5027"/>
    </location>
</feature>
<feature type="binding site" evidence="7">
    <location>
        <position position="5502"/>
    </location>
    <ligand>
        <name>S-adenosyl-L-methionine</name>
        <dbReference type="ChEBI" id="CHEBI:59789"/>
    </ligand>
</feature>
<feature type="binding site" evidence="1">
    <location>
        <begin position="5525"/>
        <end position="5526"/>
    </location>
    <ligand>
        <name>S-adenosyl-L-methionine</name>
        <dbReference type="ChEBI" id="CHEBI:59789"/>
    </ligand>
</feature>
<feature type="binding site" evidence="1">
    <location>
        <position position="5528"/>
    </location>
    <ligand>
        <name>Zn(2+)</name>
        <dbReference type="ChEBI" id="CHEBI:29105"/>
    </ligand>
</feature>
<feature type="binding site" evidence="1">
    <location>
        <position position="5576"/>
    </location>
    <ligand>
        <name>Zn(2+)</name>
        <dbReference type="ChEBI" id="CHEBI:29105"/>
    </ligand>
</feature>
<feature type="binding site" evidence="1">
    <location>
        <position position="5578"/>
    </location>
    <ligand>
        <name>Zn(2+)</name>
        <dbReference type="ChEBI" id="CHEBI:29105"/>
    </ligand>
</feature>
<feature type="binding site" evidence="1">
    <location>
        <position position="5583"/>
    </location>
    <ligand>
        <name>Zn(2+)</name>
        <dbReference type="ChEBI" id="CHEBI:29105"/>
    </ligand>
</feature>
<feature type="modified residue" description="Phosphoserine" evidence="16">
    <location>
        <position position="727"/>
    </location>
</feature>
<feature type="modified residue" description="Phosphoserine" evidence="2">
    <location>
        <position position="1107"/>
    </location>
</feature>
<feature type="modified residue" description="Phosphoserine" evidence="2">
    <location>
        <position position="1205"/>
    </location>
</feature>
<feature type="modified residue" description="Phosphothreonine" evidence="16">
    <location>
        <position position="1223"/>
    </location>
</feature>
<feature type="modified residue" description="Phosphoserine" evidence="16">
    <location>
        <position position="1226"/>
    </location>
</feature>
<feature type="modified residue" description="Phosphoserine" evidence="2">
    <location>
        <position position="1562"/>
    </location>
</feature>
<feature type="modified residue" description="Phosphoserine" evidence="15 16">
    <location>
        <position position="1627"/>
    </location>
</feature>
<feature type="modified residue" description="Phosphoserine" evidence="2">
    <location>
        <position position="1791"/>
    </location>
</feature>
<feature type="modified residue" description="Phosphothreonine" evidence="16">
    <location>
        <position position="1822"/>
    </location>
</feature>
<feature type="modified residue" description="Phosphoserine" evidence="2">
    <location>
        <position position="2196"/>
    </location>
</feature>
<feature type="modified residue" description="Phosphothreonine" evidence="2">
    <location>
        <position position="2197"/>
    </location>
</feature>
<feature type="modified residue" description="N6-acetyllysine" evidence="2">
    <location>
        <position position="2203"/>
    </location>
</feature>
<feature type="modified residue" description="Phosphoserine" evidence="2">
    <location>
        <position position="2217"/>
    </location>
</feature>
<feature type="modified residue" description="Phosphoserine" evidence="2">
    <location>
        <position position="2231"/>
    </location>
</feature>
<feature type="modified residue" description="Phosphoserine" evidence="16">
    <location>
        <position position="2266"/>
    </location>
</feature>
<feature type="modified residue" description="Phosphoserine" evidence="2">
    <location>
        <position position="2268"/>
    </location>
</feature>
<feature type="modified residue" description="Phosphoserine" evidence="16">
    <location>
        <position position="2299"/>
    </location>
</feature>
<feature type="modified residue" description="Asymmetric dimethylarginine" evidence="18">
    <location>
        <position position="2492"/>
    </location>
</feature>
<feature type="modified residue" description="Phosphoserine" evidence="16">
    <location>
        <position position="2597"/>
    </location>
</feature>
<feature type="modified residue" description="Asymmetric dimethylarginine" evidence="18">
    <location>
        <position position="2829"/>
    </location>
</feature>
<feature type="modified residue" description="N6-acetyllysine" evidence="17">
    <location>
        <position position="3071"/>
    </location>
</feature>
<feature type="modified residue" description="Phosphoserine" evidence="2">
    <location>
        <position position="3122"/>
    </location>
</feature>
<feature type="modified residue" description="Phosphoserine" evidence="2">
    <location>
        <position position="3193"/>
    </location>
</feature>
<feature type="modified residue" description="N6-acetyllysine" evidence="2">
    <location>
        <position position="3430"/>
    </location>
</feature>
<feature type="modified residue" description="Asymmetric dimethylarginine" evidence="18">
    <location>
        <position position="3725"/>
    </location>
</feature>
<feature type="modified residue" description="Asymmetric dimethylarginine" evidence="18">
    <location>
        <position position="4255"/>
    </location>
</feature>
<feature type="modified residue" description="Phosphoserine" evidence="2">
    <location>
        <position position="4272"/>
    </location>
</feature>
<feature type="modified residue" description="Phosphoserine" evidence="16">
    <location>
        <position position="4410"/>
    </location>
</feature>
<feature type="modified residue" description="N6-acetyllysine" evidence="2">
    <location>
        <position position="4516"/>
    </location>
</feature>
<feature type="modified residue" description="Phosphoserine" evidence="14 16">
    <location>
        <position position="4789"/>
    </location>
</feature>
<feature type="modified residue" description="N6-acetyllysine" evidence="2">
    <location>
        <position position="4827"/>
    </location>
</feature>
<feature type="cross-link" description="Glycyl lysine isopeptide (Lys-Gly) (interchain with G-Cter in SUMO2)" evidence="2">
    <location>
        <position position="4807"/>
    </location>
</feature>
<feature type="cross-link" description="Glycyl lysine isopeptide (Lys-Gly) (interchain with G-Cter in SUMO2)" evidence="2">
    <location>
        <position position="4931"/>
    </location>
</feature>
<accession>Q6PDK2</accession>
<keyword id="KW-0007">Acetylation</keyword>
<keyword id="KW-0156">Chromatin regulator</keyword>
<keyword id="KW-0175">Coiled coil</keyword>
<keyword id="KW-1017">Isopeptide bond</keyword>
<keyword id="KW-0479">Metal-binding</keyword>
<keyword id="KW-0488">Methylation</keyword>
<keyword id="KW-0489">Methyltransferase</keyword>
<keyword id="KW-0539">Nucleus</keyword>
<keyword id="KW-0597">Phosphoprotein</keyword>
<keyword id="KW-1185">Reference proteome</keyword>
<keyword id="KW-0677">Repeat</keyword>
<keyword id="KW-0949">S-adenosyl-L-methionine</keyword>
<keyword id="KW-0804">Transcription</keyword>
<keyword id="KW-0805">Transcription regulation</keyword>
<keyword id="KW-0808">Transferase</keyword>
<keyword id="KW-0832">Ubl conjugation</keyword>
<keyword id="KW-0862">Zinc</keyword>
<keyword id="KW-0863">Zinc-finger</keyword>
<gene>
    <name type="primary">Kmt2d</name>
    <name type="synonym">Mll2</name>
    <name type="synonym">Mll4</name>
</gene>